<name>YBEY_STAAS</name>
<evidence type="ECO:0000255" key="1">
    <source>
        <dbReference type="HAMAP-Rule" id="MF_00009"/>
    </source>
</evidence>
<feature type="chain" id="PRO_0000102531" description="Endoribonuclease YbeY">
    <location>
        <begin position="1"/>
        <end position="155"/>
    </location>
</feature>
<feature type="binding site" evidence="1">
    <location>
        <position position="120"/>
    </location>
    <ligand>
        <name>Zn(2+)</name>
        <dbReference type="ChEBI" id="CHEBI:29105"/>
        <note>catalytic</note>
    </ligand>
</feature>
<feature type="binding site" evidence="1">
    <location>
        <position position="124"/>
    </location>
    <ligand>
        <name>Zn(2+)</name>
        <dbReference type="ChEBI" id="CHEBI:29105"/>
        <note>catalytic</note>
    </ligand>
</feature>
<feature type="binding site" evidence="1">
    <location>
        <position position="130"/>
    </location>
    <ligand>
        <name>Zn(2+)</name>
        <dbReference type="ChEBI" id="CHEBI:29105"/>
        <note>catalytic</note>
    </ligand>
</feature>
<reference key="1">
    <citation type="journal article" date="2004" name="Proc. Natl. Acad. Sci. U.S.A.">
        <title>Complete genomes of two clinical Staphylococcus aureus strains: evidence for the rapid evolution of virulence and drug resistance.</title>
        <authorList>
            <person name="Holden M.T.G."/>
            <person name="Feil E.J."/>
            <person name="Lindsay J.A."/>
            <person name="Peacock S.J."/>
            <person name="Day N.P.J."/>
            <person name="Enright M.C."/>
            <person name="Foster T.J."/>
            <person name="Moore C.E."/>
            <person name="Hurst L."/>
            <person name="Atkin R."/>
            <person name="Barron A."/>
            <person name="Bason N."/>
            <person name="Bentley S.D."/>
            <person name="Chillingworth C."/>
            <person name="Chillingworth T."/>
            <person name="Churcher C."/>
            <person name="Clark L."/>
            <person name="Corton C."/>
            <person name="Cronin A."/>
            <person name="Doggett J."/>
            <person name="Dowd L."/>
            <person name="Feltwell T."/>
            <person name="Hance Z."/>
            <person name="Harris B."/>
            <person name="Hauser H."/>
            <person name="Holroyd S."/>
            <person name="Jagels K."/>
            <person name="James K.D."/>
            <person name="Lennard N."/>
            <person name="Line A."/>
            <person name="Mayes R."/>
            <person name="Moule S."/>
            <person name="Mungall K."/>
            <person name="Ormond D."/>
            <person name="Quail M.A."/>
            <person name="Rabbinowitsch E."/>
            <person name="Rutherford K.M."/>
            <person name="Sanders M."/>
            <person name="Sharp S."/>
            <person name="Simmonds M."/>
            <person name="Stevens K."/>
            <person name="Whitehead S."/>
            <person name="Barrell B.G."/>
            <person name="Spratt B.G."/>
            <person name="Parkhill J."/>
        </authorList>
    </citation>
    <scope>NUCLEOTIDE SEQUENCE [LARGE SCALE GENOMIC DNA]</scope>
    <source>
        <strain>MSSA476</strain>
    </source>
</reference>
<accession>Q6G8Z7</accession>
<sequence>MFTIDFSDHTGLVKDAWYKQIEDLLEFAKKEEHIEDDAELSVTFVDKQEIQEINRTYRDKDKVTDVISFALEEDEPEIDFSGLDIPRVLGDIIICTDVAQEQANNYGHSFERELGFLALHGFLHLLGYDHMTEADEKEMFGRQDTILNAYGLTRG</sequence>
<proteinExistence type="inferred from homology"/>
<comment type="function">
    <text evidence="1">Single strand-specific metallo-endoribonuclease involved in late-stage 70S ribosome quality control and in maturation of the 3' terminus of the 16S rRNA.</text>
</comment>
<comment type="cofactor">
    <cofactor evidence="1">
        <name>Zn(2+)</name>
        <dbReference type="ChEBI" id="CHEBI:29105"/>
    </cofactor>
    <text evidence="1">Binds 1 zinc ion.</text>
</comment>
<comment type="subcellular location">
    <subcellularLocation>
        <location evidence="1">Cytoplasm</location>
    </subcellularLocation>
</comment>
<comment type="similarity">
    <text evidence="1">Belongs to the endoribonuclease YbeY family.</text>
</comment>
<gene>
    <name evidence="1" type="primary">ybeY</name>
    <name type="ordered locus">SAS1508</name>
</gene>
<organism>
    <name type="scientific">Staphylococcus aureus (strain MSSA476)</name>
    <dbReference type="NCBI Taxonomy" id="282459"/>
    <lineage>
        <taxon>Bacteria</taxon>
        <taxon>Bacillati</taxon>
        <taxon>Bacillota</taxon>
        <taxon>Bacilli</taxon>
        <taxon>Bacillales</taxon>
        <taxon>Staphylococcaceae</taxon>
        <taxon>Staphylococcus</taxon>
    </lineage>
</organism>
<keyword id="KW-0963">Cytoplasm</keyword>
<keyword id="KW-0255">Endonuclease</keyword>
<keyword id="KW-0378">Hydrolase</keyword>
<keyword id="KW-0479">Metal-binding</keyword>
<keyword id="KW-0540">Nuclease</keyword>
<keyword id="KW-0690">Ribosome biogenesis</keyword>
<keyword id="KW-0698">rRNA processing</keyword>
<keyword id="KW-0862">Zinc</keyword>
<protein>
    <recommendedName>
        <fullName evidence="1">Endoribonuclease YbeY</fullName>
        <ecNumber evidence="1">3.1.-.-</ecNumber>
    </recommendedName>
</protein>
<dbReference type="EC" id="3.1.-.-" evidence="1"/>
<dbReference type="EMBL" id="BX571857">
    <property type="protein sequence ID" value="CAG43309.1"/>
    <property type="molecule type" value="Genomic_DNA"/>
</dbReference>
<dbReference type="RefSeq" id="WP_000494135.1">
    <property type="nucleotide sequence ID" value="NC_002953.3"/>
</dbReference>
<dbReference type="SMR" id="Q6G8Z7"/>
<dbReference type="KEGG" id="sas:SAS1508"/>
<dbReference type="HOGENOM" id="CLU_106710_3_0_9"/>
<dbReference type="GO" id="GO:0005737">
    <property type="term" value="C:cytoplasm"/>
    <property type="evidence" value="ECO:0007669"/>
    <property type="project" value="UniProtKB-SubCell"/>
</dbReference>
<dbReference type="GO" id="GO:0004222">
    <property type="term" value="F:metalloendopeptidase activity"/>
    <property type="evidence" value="ECO:0007669"/>
    <property type="project" value="InterPro"/>
</dbReference>
<dbReference type="GO" id="GO:0004521">
    <property type="term" value="F:RNA endonuclease activity"/>
    <property type="evidence" value="ECO:0007669"/>
    <property type="project" value="UniProtKB-UniRule"/>
</dbReference>
<dbReference type="GO" id="GO:0008270">
    <property type="term" value="F:zinc ion binding"/>
    <property type="evidence" value="ECO:0007669"/>
    <property type="project" value="UniProtKB-UniRule"/>
</dbReference>
<dbReference type="GO" id="GO:0006364">
    <property type="term" value="P:rRNA processing"/>
    <property type="evidence" value="ECO:0007669"/>
    <property type="project" value="UniProtKB-UniRule"/>
</dbReference>
<dbReference type="Gene3D" id="3.40.390.30">
    <property type="entry name" value="Metalloproteases ('zincins'), catalytic domain"/>
    <property type="match status" value="1"/>
</dbReference>
<dbReference type="HAMAP" id="MF_00009">
    <property type="entry name" value="Endoribonucl_YbeY"/>
    <property type="match status" value="1"/>
</dbReference>
<dbReference type="InterPro" id="IPR023091">
    <property type="entry name" value="MetalPrtase_cat_dom_sf_prd"/>
</dbReference>
<dbReference type="InterPro" id="IPR002036">
    <property type="entry name" value="YbeY"/>
</dbReference>
<dbReference type="InterPro" id="IPR020549">
    <property type="entry name" value="YbeY_CS"/>
</dbReference>
<dbReference type="NCBIfam" id="TIGR00043">
    <property type="entry name" value="rRNA maturation RNase YbeY"/>
    <property type="match status" value="1"/>
</dbReference>
<dbReference type="PANTHER" id="PTHR46986">
    <property type="entry name" value="ENDORIBONUCLEASE YBEY, CHLOROPLASTIC"/>
    <property type="match status" value="1"/>
</dbReference>
<dbReference type="PANTHER" id="PTHR46986:SF1">
    <property type="entry name" value="ENDORIBONUCLEASE YBEY, CHLOROPLASTIC"/>
    <property type="match status" value="1"/>
</dbReference>
<dbReference type="Pfam" id="PF02130">
    <property type="entry name" value="YbeY"/>
    <property type="match status" value="1"/>
</dbReference>
<dbReference type="SUPFAM" id="SSF55486">
    <property type="entry name" value="Metalloproteases ('zincins'), catalytic domain"/>
    <property type="match status" value="1"/>
</dbReference>
<dbReference type="PROSITE" id="PS01306">
    <property type="entry name" value="UPF0054"/>
    <property type="match status" value="1"/>
</dbReference>